<comment type="function">
    <text evidence="1">Catalyzes the phosphorylation of the 3'-hydroxyl group of dephosphocoenzyme A to form coenzyme A.</text>
</comment>
<comment type="catalytic activity">
    <reaction evidence="1">
        <text>3'-dephospho-CoA + ATP = ADP + CoA + H(+)</text>
        <dbReference type="Rhea" id="RHEA:18245"/>
        <dbReference type="ChEBI" id="CHEBI:15378"/>
        <dbReference type="ChEBI" id="CHEBI:30616"/>
        <dbReference type="ChEBI" id="CHEBI:57287"/>
        <dbReference type="ChEBI" id="CHEBI:57328"/>
        <dbReference type="ChEBI" id="CHEBI:456216"/>
        <dbReference type="EC" id="2.7.1.24"/>
    </reaction>
</comment>
<comment type="pathway">
    <text evidence="1">Cofactor biosynthesis; coenzyme A biosynthesis; CoA from (R)-pantothenate: step 5/5.</text>
</comment>
<comment type="subcellular location">
    <subcellularLocation>
        <location evidence="1">Cytoplasm</location>
    </subcellularLocation>
</comment>
<comment type="similarity">
    <text evidence="1 2">Belongs to the CoaE family.</text>
</comment>
<evidence type="ECO:0000255" key="1">
    <source>
        <dbReference type="HAMAP-Rule" id="MF_00376"/>
    </source>
</evidence>
<evidence type="ECO:0000305" key="2"/>
<accession>P56186</accession>
<protein>
    <recommendedName>
        <fullName evidence="1">Dephospho-CoA kinase</fullName>
        <ecNumber evidence="1">2.7.1.24</ecNumber>
    </recommendedName>
    <alternativeName>
        <fullName evidence="1">Dephosphocoenzyme A kinase</fullName>
    </alternativeName>
</protein>
<feature type="chain" id="PRO_0000172897" description="Dephospho-CoA kinase">
    <location>
        <begin position="1"/>
        <end position="204"/>
    </location>
</feature>
<feature type="domain" description="DPCK" evidence="1">
    <location>
        <begin position="3"/>
        <end position="200"/>
    </location>
</feature>
<feature type="binding site" evidence="1">
    <location>
        <begin position="11"/>
        <end position="16"/>
    </location>
    <ligand>
        <name>ATP</name>
        <dbReference type="ChEBI" id="CHEBI:30616"/>
    </ligand>
</feature>
<dbReference type="EC" id="2.7.1.24" evidence="1"/>
<dbReference type="EMBL" id="U20255">
    <property type="status" value="NOT_ANNOTATED_CDS"/>
    <property type="molecule type" value="Genomic_DNA"/>
</dbReference>
<dbReference type="SMR" id="P56186"/>
<dbReference type="UniPathway" id="UPA00241">
    <property type="reaction ID" value="UER00356"/>
</dbReference>
<dbReference type="GO" id="GO:0005737">
    <property type="term" value="C:cytoplasm"/>
    <property type="evidence" value="ECO:0007669"/>
    <property type="project" value="UniProtKB-SubCell"/>
</dbReference>
<dbReference type="GO" id="GO:0005524">
    <property type="term" value="F:ATP binding"/>
    <property type="evidence" value="ECO:0007669"/>
    <property type="project" value="UniProtKB-UniRule"/>
</dbReference>
<dbReference type="GO" id="GO:0004140">
    <property type="term" value="F:dephospho-CoA kinase activity"/>
    <property type="evidence" value="ECO:0007669"/>
    <property type="project" value="UniProtKB-UniRule"/>
</dbReference>
<dbReference type="GO" id="GO:0015937">
    <property type="term" value="P:coenzyme A biosynthetic process"/>
    <property type="evidence" value="ECO:0007669"/>
    <property type="project" value="UniProtKB-UniRule"/>
</dbReference>
<dbReference type="CDD" id="cd02022">
    <property type="entry name" value="DPCK"/>
    <property type="match status" value="1"/>
</dbReference>
<dbReference type="FunFam" id="3.40.50.300:FF:000518">
    <property type="entry name" value="Dephospho-CoA kinase"/>
    <property type="match status" value="1"/>
</dbReference>
<dbReference type="Gene3D" id="3.40.50.300">
    <property type="entry name" value="P-loop containing nucleotide triphosphate hydrolases"/>
    <property type="match status" value="1"/>
</dbReference>
<dbReference type="HAMAP" id="MF_00376">
    <property type="entry name" value="Dephospho_CoA_kinase"/>
    <property type="match status" value="1"/>
</dbReference>
<dbReference type="InterPro" id="IPR001977">
    <property type="entry name" value="Depp_CoAkinase"/>
</dbReference>
<dbReference type="InterPro" id="IPR027417">
    <property type="entry name" value="P-loop_NTPase"/>
</dbReference>
<dbReference type="NCBIfam" id="TIGR00152">
    <property type="entry name" value="dephospho-CoA kinase"/>
    <property type="match status" value="1"/>
</dbReference>
<dbReference type="PANTHER" id="PTHR10695:SF46">
    <property type="entry name" value="BIFUNCTIONAL COENZYME A SYNTHASE-RELATED"/>
    <property type="match status" value="1"/>
</dbReference>
<dbReference type="PANTHER" id="PTHR10695">
    <property type="entry name" value="DEPHOSPHO-COA KINASE-RELATED"/>
    <property type="match status" value="1"/>
</dbReference>
<dbReference type="Pfam" id="PF01121">
    <property type="entry name" value="CoaE"/>
    <property type="match status" value="1"/>
</dbReference>
<dbReference type="SUPFAM" id="SSF52540">
    <property type="entry name" value="P-loop containing nucleoside triphosphate hydrolases"/>
    <property type="match status" value="1"/>
</dbReference>
<dbReference type="PROSITE" id="PS51219">
    <property type="entry name" value="DPCK"/>
    <property type="match status" value="1"/>
</dbReference>
<organism>
    <name type="scientific">Aeromonas hydrophila</name>
    <dbReference type="NCBI Taxonomy" id="644"/>
    <lineage>
        <taxon>Bacteria</taxon>
        <taxon>Pseudomonadati</taxon>
        <taxon>Pseudomonadota</taxon>
        <taxon>Gammaproteobacteria</taxon>
        <taxon>Aeromonadales</taxon>
        <taxon>Aeromonadaceae</taxon>
        <taxon>Aeromonas</taxon>
    </lineage>
</organism>
<name>COAE_AERHY</name>
<reference key="1">
    <citation type="journal article" date="1996" name="Mol. Microbiol.">
        <title>Cloning of an Aeromonas hydrophila type IV pilus biogenesis gene cluster: complementation of pilus assembly functions and characterization of a type IV leader peptidase/N-methyltransferase required for extracellular protein secretion.</title>
        <authorList>
            <person name="Pepe C.M."/>
            <person name="Eklund M.W."/>
            <person name="Strom M.S."/>
        </authorList>
    </citation>
    <scope>NUCLEOTIDE SEQUENCE [GENOMIC DNA]</scope>
    <source>
        <strain>Ah65</strain>
    </source>
</reference>
<reference key="2">
    <citation type="unpublished observations" date="1997-01">
        <authorList>
            <person name="Rudd K.E."/>
        </authorList>
    </citation>
    <scope>IDENTIFICATION</scope>
</reference>
<proteinExistence type="inferred from homology"/>
<keyword id="KW-0067">ATP-binding</keyword>
<keyword id="KW-0173">Coenzyme A biosynthesis</keyword>
<keyword id="KW-0963">Cytoplasm</keyword>
<keyword id="KW-0418">Kinase</keyword>
<keyword id="KW-0547">Nucleotide-binding</keyword>
<keyword id="KW-0808">Transferase</keyword>
<sequence>MYVVAITGGIGSGKTTIANQFAELGIDVVDADVIAREVVEPGAPALAAIAAHFGPDVIAADGQLDRRSLRERVFSDPDAKVWLNALLHPLIRQEMFGRCAAAHSPYCLLVVPLLVENKLTGLANRVLVIDVDEATQIERTCRRDGVSREQVQAILAAQASRAERLAAADDVLDNKNGAPETIKPRILALHETYMAFASQQASQV</sequence>
<gene>
    <name evidence="1" type="primary">coaE</name>
</gene>